<name>AMPA_METPB</name>
<gene>
    <name evidence="1" type="primary">pepA</name>
    <name type="ordered locus">Mpop_3937</name>
</gene>
<sequence>MAGGIEIAFEPLSSRGRGGDVVVFVGDDLALSGPAAEILGRPGAELVVRAAASERFKGKAQSALVLPAPAGVEADRLVVIGLGSEKDRAKTDWTLLGGFTAGKVGGRSARVVLDWPGYAGSARDVADFTLGARLRSYRFDQYKTKKKDEDEAGAALSLLVADPSGAQAAARDAAAVAEGVILARNLVNEPPNVLYPEEYARRVSELTSLGVEIEILDVARMKELGMGALLAVAQGSAREPRVAIMRWNGADDPSEPPLALIGKGVVFDSGGVSIKSAGGMEDMKGDMGGSAAVVGTLHALAARKAKANVVGAIGIVENMPDGNSYRPSDIVTSLSGQTIEVINTDAEGRLVLADVLWHVQATYKPKAMIDLATLTGAIIVALGQDIAGLFSNDDALSAQITAAGEAAGEKVWRMPLIPAFDKAIDSKFADMKNTGGRHGGAATAAAFLKRYVNDVPWAHLDIAGVGMSSTPSEINRSWGAGWGVRLLDRLVREHYER</sequence>
<accession>B1ZAK8</accession>
<feature type="chain" id="PRO_1000098329" description="Probable cytosol aminopeptidase">
    <location>
        <begin position="1"/>
        <end position="497"/>
    </location>
</feature>
<feature type="active site" evidence="1">
    <location>
        <position position="275"/>
    </location>
</feature>
<feature type="active site" evidence="1">
    <location>
        <position position="349"/>
    </location>
</feature>
<feature type="binding site" evidence="1">
    <location>
        <position position="263"/>
    </location>
    <ligand>
        <name>Mn(2+)</name>
        <dbReference type="ChEBI" id="CHEBI:29035"/>
        <label>2</label>
    </ligand>
</feature>
<feature type="binding site" evidence="1">
    <location>
        <position position="268"/>
    </location>
    <ligand>
        <name>Mn(2+)</name>
        <dbReference type="ChEBI" id="CHEBI:29035"/>
        <label>1</label>
    </ligand>
</feature>
<feature type="binding site" evidence="1">
    <location>
        <position position="268"/>
    </location>
    <ligand>
        <name>Mn(2+)</name>
        <dbReference type="ChEBI" id="CHEBI:29035"/>
        <label>2</label>
    </ligand>
</feature>
<feature type="binding site" evidence="1">
    <location>
        <position position="286"/>
    </location>
    <ligand>
        <name>Mn(2+)</name>
        <dbReference type="ChEBI" id="CHEBI:29035"/>
        <label>2</label>
    </ligand>
</feature>
<feature type="binding site" evidence="1">
    <location>
        <position position="345"/>
    </location>
    <ligand>
        <name>Mn(2+)</name>
        <dbReference type="ChEBI" id="CHEBI:29035"/>
        <label>1</label>
    </ligand>
</feature>
<feature type="binding site" evidence="1">
    <location>
        <position position="347"/>
    </location>
    <ligand>
        <name>Mn(2+)</name>
        <dbReference type="ChEBI" id="CHEBI:29035"/>
        <label>1</label>
    </ligand>
</feature>
<feature type="binding site" evidence="1">
    <location>
        <position position="347"/>
    </location>
    <ligand>
        <name>Mn(2+)</name>
        <dbReference type="ChEBI" id="CHEBI:29035"/>
        <label>2</label>
    </ligand>
</feature>
<reference key="1">
    <citation type="submission" date="2008-04" db="EMBL/GenBank/DDBJ databases">
        <title>Complete sequence of chromosome of Methylobacterium populi BJ001.</title>
        <authorList>
            <consortium name="US DOE Joint Genome Institute"/>
            <person name="Copeland A."/>
            <person name="Lucas S."/>
            <person name="Lapidus A."/>
            <person name="Glavina del Rio T."/>
            <person name="Dalin E."/>
            <person name="Tice H."/>
            <person name="Bruce D."/>
            <person name="Goodwin L."/>
            <person name="Pitluck S."/>
            <person name="Chertkov O."/>
            <person name="Brettin T."/>
            <person name="Detter J.C."/>
            <person name="Han C."/>
            <person name="Kuske C.R."/>
            <person name="Schmutz J."/>
            <person name="Larimer F."/>
            <person name="Land M."/>
            <person name="Hauser L."/>
            <person name="Kyrpides N."/>
            <person name="Mikhailova N."/>
            <person name="Marx C."/>
            <person name="Richardson P."/>
        </authorList>
    </citation>
    <scope>NUCLEOTIDE SEQUENCE [LARGE SCALE GENOMIC DNA]</scope>
    <source>
        <strain>ATCC BAA-705 / NCIMB 13946 / BJ001</strain>
    </source>
</reference>
<proteinExistence type="inferred from homology"/>
<dbReference type="EC" id="3.4.11.1" evidence="1"/>
<dbReference type="EC" id="3.4.11.10" evidence="1"/>
<dbReference type="EMBL" id="CP001029">
    <property type="protein sequence ID" value="ACB82064.1"/>
    <property type="molecule type" value="Genomic_DNA"/>
</dbReference>
<dbReference type="RefSeq" id="WP_012455767.1">
    <property type="nucleotide sequence ID" value="NC_010725.1"/>
</dbReference>
<dbReference type="SMR" id="B1ZAK8"/>
<dbReference type="STRING" id="441620.Mpop_3937"/>
<dbReference type="KEGG" id="mpo:Mpop_3937"/>
<dbReference type="eggNOG" id="COG0260">
    <property type="taxonomic scope" value="Bacteria"/>
</dbReference>
<dbReference type="HOGENOM" id="CLU_013734_6_0_5"/>
<dbReference type="OrthoDB" id="9809354at2"/>
<dbReference type="Proteomes" id="UP000007136">
    <property type="component" value="Chromosome"/>
</dbReference>
<dbReference type="GO" id="GO:0005737">
    <property type="term" value="C:cytoplasm"/>
    <property type="evidence" value="ECO:0007669"/>
    <property type="project" value="UniProtKB-SubCell"/>
</dbReference>
<dbReference type="GO" id="GO:0030145">
    <property type="term" value="F:manganese ion binding"/>
    <property type="evidence" value="ECO:0007669"/>
    <property type="project" value="UniProtKB-UniRule"/>
</dbReference>
<dbReference type="GO" id="GO:0070006">
    <property type="term" value="F:metalloaminopeptidase activity"/>
    <property type="evidence" value="ECO:0007669"/>
    <property type="project" value="InterPro"/>
</dbReference>
<dbReference type="GO" id="GO:0006508">
    <property type="term" value="P:proteolysis"/>
    <property type="evidence" value="ECO:0007669"/>
    <property type="project" value="UniProtKB-KW"/>
</dbReference>
<dbReference type="CDD" id="cd00433">
    <property type="entry name" value="Peptidase_M17"/>
    <property type="match status" value="1"/>
</dbReference>
<dbReference type="Gene3D" id="3.40.220.10">
    <property type="entry name" value="Leucine Aminopeptidase, subunit E, domain 1"/>
    <property type="match status" value="1"/>
</dbReference>
<dbReference type="Gene3D" id="3.40.630.10">
    <property type="entry name" value="Zn peptidases"/>
    <property type="match status" value="1"/>
</dbReference>
<dbReference type="HAMAP" id="MF_00181">
    <property type="entry name" value="Cytosol_peptidase_M17"/>
    <property type="match status" value="1"/>
</dbReference>
<dbReference type="InterPro" id="IPR011356">
    <property type="entry name" value="Leucine_aapep/pepB"/>
</dbReference>
<dbReference type="InterPro" id="IPR043472">
    <property type="entry name" value="Macro_dom-like"/>
</dbReference>
<dbReference type="InterPro" id="IPR000819">
    <property type="entry name" value="Peptidase_M17_C"/>
</dbReference>
<dbReference type="InterPro" id="IPR023042">
    <property type="entry name" value="Peptidase_M17_leu_NH2_pept"/>
</dbReference>
<dbReference type="InterPro" id="IPR008283">
    <property type="entry name" value="Peptidase_M17_N"/>
</dbReference>
<dbReference type="NCBIfam" id="NF002074">
    <property type="entry name" value="PRK00913.1-4"/>
    <property type="match status" value="1"/>
</dbReference>
<dbReference type="NCBIfam" id="NF002075">
    <property type="entry name" value="PRK00913.2-2"/>
    <property type="match status" value="1"/>
</dbReference>
<dbReference type="NCBIfam" id="NF002077">
    <property type="entry name" value="PRK00913.2-4"/>
    <property type="match status" value="1"/>
</dbReference>
<dbReference type="PANTHER" id="PTHR11963:SF23">
    <property type="entry name" value="CYTOSOL AMINOPEPTIDASE"/>
    <property type="match status" value="1"/>
</dbReference>
<dbReference type="PANTHER" id="PTHR11963">
    <property type="entry name" value="LEUCINE AMINOPEPTIDASE-RELATED"/>
    <property type="match status" value="1"/>
</dbReference>
<dbReference type="Pfam" id="PF00883">
    <property type="entry name" value="Peptidase_M17"/>
    <property type="match status" value="1"/>
</dbReference>
<dbReference type="Pfam" id="PF02789">
    <property type="entry name" value="Peptidase_M17_N"/>
    <property type="match status" value="1"/>
</dbReference>
<dbReference type="PRINTS" id="PR00481">
    <property type="entry name" value="LAMNOPPTDASE"/>
</dbReference>
<dbReference type="SUPFAM" id="SSF52949">
    <property type="entry name" value="Macro domain-like"/>
    <property type="match status" value="1"/>
</dbReference>
<dbReference type="SUPFAM" id="SSF53187">
    <property type="entry name" value="Zn-dependent exopeptidases"/>
    <property type="match status" value="1"/>
</dbReference>
<dbReference type="PROSITE" id="PS00631">
    <property type="entry name" value="CYTOSOL_AP"/>
    <property type="match status" value="1"/>
</dbReference>
<evidence type="ECO:0000255" key="1">
    <source>
        <dbReference type="HAMAP-Rule" id="MF_00181"/>
    </source>
</evidence>
<comment type="function">
    <text evidence="1">Presumably involved in the processing and regular turnover of intracellular proteins. Catalyzes the removal of unsubstituted N-terminal amino acids from various peptides.</text>
</comment>
<comment type="catalytic activity">
    <reaction evidence="1">
        <text>Release of an N-terminal amino acid, Xaa-|-Yaa-, in which Xaa is preferably Leu, but may be other amino acids including Pro although not Arg or Lys, and Yaa may be Pro. Amino acid amides and methyl esters are also readily hydrolyzed, but rates on arylamides are exceedingly low.</text>
        <dbReference type="EC" id="3.4.11.1"/>
    </reaction>
</comment>
<comment type="catalytic activity">
    <reaction evidence="1">
        <text>Release of an N-terminal amino acid, preferentially leucine, but not glutamic or aspartic acids.</text>
        <dbReference type="EC" id="3.4.11.10"/>
    </reaction>
</comment>
<comment type="cofactor">
    <cofactor evidence="1">
        <name>Mn(2+)</name>
        <dbReference type="ChEBI" id="CHEBI:29035"/>
    </cofactor>
    <text evidence="1">Binds 2 manganese ions per subunit.</text>
</comment>
<comment type="subcellular location">
    <subcellularLocation>
        <location evidence="1">Cytoplasm</location>
    </subcellularLocation>
</comment>
<comment type="similarity">
    <text evidence="1">Belongs to the peptidase M17 family.</text>
</comment>
<keyword id="KW-0031">Aminopeptidase</keyword>
<keyword id="KW-0963">Cytoplasm</keyword>
<keyword id="KW-0378">Hydrolase</keyword>
<keyword id="KW-0464">Manganese</keyword>
<keyword id="KW-0479">Metal-binding</keyword>
<keyword id="KW-0645">Protease</keyword>
<protein>
    <recommendedName>
        <fullName evidence="1">Probable cytosol aminopeptidase</fullName>
        <ecNumber evidence="1">3.4.11.1</ecNumber>
    </recommendedName>
    <alternativeName>
        <fullName evidence="1">Leucine aminopeptidase</fullName>
        <shortName evidence="1">LAP</shortName>
        <ecNumber evidence="1">3.4.11.10</ecNumber>
    </alternativeName>
    <alternativeName>
        <fullName evidence="1">Leucyl aminopeptidase</fullName>
    </alternativeName>
</protein>
<organism>
    <name type="scientific">Methylorubrum populi (strain ATCC BAA-705 / NCIMB 13946 / BJ001)</name>
    <name type="common">Methylobacterium populi</name>
    <dbReference type="NCBI Taxonomy" id="441620"/>
    <lineage>
        <taxon>Bacteria</taxon>
        <taxon>Pseudomonadati</taxon>
        <taxon>Pseudomonadota</taxon>
        <taxon>Alphaproteobacteria</taxon>
        <taxon>Hyphomicrobiales</taxon>
        <taxon>Methylobacteriaceae</taxon>
        <taxon>Methylorubrum</taxon>
    </lineage>
</organism>